<comment type="function">
    <text evidence="1">Catalyzes the reversible cleavage of pseudouridine 5'-phosphate (PsiMP) to ribose 5-phosphate and uracil. Functions biologically in the cleavage direction, as part of a pseudouridine degradation pathway.</text>
</comment>
<comment type="catalytic activity">
    <reaction evidence="1">
        <text>D-ribose 5-phosphate + uracil = psi-UMP + H2O</text>
        <dbReference type="Rhea" id="RHEA:18337"/>
        <dbReference type="ChEBI" id="CHEBI:15377"/>
        <dbReference type="ChEBI" id="CHEBI:17568"/>
        <dbReference type="ChEBI" id="CHEBI:58380"/>
        <dbReference type="ChEBI" id="CHEBI:78346"/>
        <dbReference type="EC" id="4.2.1.70"/>
    </reaction>
</comment>
<comment type="cofactor">
    <cofactor evidence="1">
        <name>Mn(2+)</name>
        <dbReference type="ChEBI" id="CHEBI:29035"/>
    </cofactor>
    <text evidence="1">Binds 1 Mn(2+) ion per subunit.</text>
</comment>
<comment type="subunit">
    <text evidence="1">Homotrimer.</text>
</comment>
<comment type="similarity">
    <text evidence="1">Belongs to the pseudouridine-5'-phosphate glycosidase family.</text>
</comment>
<organism>
    <name type="scientific">Photorhabdus laumondii subsp. laumondii (strain DSM 15139 / CIP 105565 / TT01)</name>
    <name type="common">Photorhabdus luminescens subsp. laumondii</name>
    <dbReference type="NCBI Taxonomy" id="243265"/>
    <lineage>
        <taxon>Bacteria</taxon>
        <taxon>Pseudomonadati</taxon>
        <taxon>Pseudomonadota</taxon>
        <taxon>Gammaproteobacteria</taxon>
        <taxon>Enterobacterales</taxon>
        <taxon>Morganellaceae</taxon>
        <taxon>Photorhabdus</taxon>
    </lineage>
</organism>
<gene>
    <name evidence="1" type="primary">psuG1</name>
    <name type="ordered locus">plu2187</name>
</gene>
<protein>
    <recommendedName>
        <fullName evidence="1">Pseudouridine-5'-phosphate glycosidase 1</fullName>
        <shortName evidence="1">PsiMP glycosidase 1</shortName>
        <ecNumber evidence="1">4.2.1.70</ecNumber>
    </recommendedName>
</protein>
<proteinExistence type="inferred from homology"/>
<feature type="chain" id="PRO_0000390535" description="Pseudouridine-5'-phosphate glycosidase 1">
    <location>
        <begin position="1"/>
        <end position="318"/>
    </location>
</feature>
<feature type="active site" description="Proton donor" evidence="1">
    <location>
        <position position="29"/>
    </location>
</feature>
<feature type="active site" description="Nucleophile" evidence="1">
    <location>
        <position position="163"/>
    </location>
</feature>
<feature type="binding site" evidence="1">
    <location>
        <position position="90"/>
    </location>
    <ligand>
        <name>substrate</name>
    </ligand>
</feature>
<feature type="binding site" evidence="1">
    <location>
        <position position="110"/>
    </location>
    <ligand>
        <name>substrate</name>
    </ligand>
</feature>
<feature type="binding site" evidence="1">
    <location>
        <position position="142"/>
    </location>
    <ligand>
        <name>Mn(2+)</name>
        <dbReference type="ChEBI" id="CHEBI:29035"/>
    </ligand>
</feature>
<feature type="binding site" evidence="1">
    <location>
        <begin position="144"/>
        <end position="146"/>
    </location>
    <ligand>
        <name>substrate</name>
    </ligand>
</feature>
<sequence>MNISNKVPFKFSLEVKEALESGKPVVALESNVITHGLDYPDNVTTAKNVEQAVRESGAIPATIGIDKGEFLIGMSDEQIEKFATASHVPKVTSRDIPVVLASGGMGATTVASSILAAEIAGIKFFCSAGIGGVHRGAETSMDISADLTQLTRSRVAVVCAGAKNILDIGLTLEFLETWNVPVISYQSDDFPAFYCRSSGFKSPQRLDELAVIAKAIEINWMLPGGKGVLITTPTKPEDALDNQKIDIIIQEAVLEAKKKNIVGNSLTKYLMRMVDRETDGISAKANMAVLVNTAEVAGKLAVAACLQSSTFFARIKSQ</sequence>
<name>PSUG1_PHOLL</name>
<keyword id="KW-0326">Glycosidase</keyword>
<keyword id="KW-0378">Hydrolase</keyword>
<keyword id="KW-0456">Lyase</keyword>
<keyword id="KW-0464">Manganese</keyword>
<keyword id="KW-0479">Metal-binding</keyword>
<keyword id="KW-1185">Reference proteome</keyword>
<evidence type="ECO:0000255" key="1">
    <source>
        <dbReference type="HAMAP-Rule" id="MF_01876"/>
    </source>
</evidence>
<reference key="1">
    <citation type="journal article" date="2003" name="Nat. Biotechnol.">
        <title>The genome sequence of the entomopathogenic bacterium Photorhabdus luminescens.</title>
        <authorList>
            <person name="Duchaud E."/>
            <person name="Rusniok C."/>
            <person name="Frangeul L."/>
            <person name="Buchrieser C."/>
            <person name="Givaudan A."/>
            <person name="Taourit S."/>
            <person name="Bocs S."/>
            <person name="Boursaux-Eude C."/>
            <person name="Chandler M."/>
            <person name="Charles J.-F."/>
            <person name="Dassa E."/>
            <person name="Derose R."/>
            <person name="Derzelle S."/>
            <person name="Freyssinet G."/>
            <person name="Gaudriault S."/>
            <person name="Medigue C."/>
            <person name="Lanois A."/>
            <person name="Powell K."/>
            <person name="Siguier P."/>
            <person name="Vincent R."/>
            <person name="Wingate V."/>
            <person name="Zouine M."/>
            <person name="Glaser P."/>
            <person name="Boemare N."/>
            <person name="Danchin A."/>
            <person name="Kunst F."/>
        </authorList>
    </citation>
    <scope>NUCLEOTIDE SEQUENCE [LARGE SCALE GENOMIC DNA]</scope>
    <source>
        <strain>DSM 15139 / CIP 105565 / TT01</strain>
    </source>
</reference>
<dbReference type="EC" id="4.2.1.70" evidence="1"/>
<dbReference type="EMBL" id="BX571866">
    <property type="protein sequence ID" value="CAE14480.1"/>
    <property type="molecule type" value="Genomic_DNA"/>
</dbReference>
<dbReference type="RefSeq" id="WP_011146441.1">
    <property type="nucleotide sequence ID" value="NC_005126.1"/>
</dbReference>
<dbReference type="SMR" id="Q7N4X5"/>
<dbReference type="STRING" id="243265.plu2187"/>
<dbReference type="GeneID" id="48848465"/>
<dbReference type="KEGG" id="plu:plu2187"/>
<dbReference type="eggNOG" id="COG2313">
    <property type="taxonomic scope" value="Bacteria"/>
</dbReference>
<dbReference type="HOGENOM" id="CLU_012201_0_1_6"/>
<dbReference type="OrthoDB" id="9805870at2"/>
<dbReference type="Proteomes" id="UP000002514">
    <property type="component" value="Chromosome"/>
</dbReference>
<dbReference type="GO" id="GO:0005737">
    <property type="term" value="C:cytoplasm"/>
    <property type="evidence" value="ECO:0007669"/>
    <property type="project" value="TreeGrafter"/>
</dbReference>
<dbReference type="GO" id="GO:0016798">
    <property type="term" value="F:hydrolase activity, acting on glycosyl bonds"/>
    <property type="evidence" value="ECO:0007669"/>
    <property type="project" value="UniProtKB-KW"/>
</dbReference>
<dbReference type="GO" id="GO:0046872">
    <property type="term" value="F:metal ion binding"/>
    <property type="evidence" value="ECO:0007669"/>
    <property type="project" value="UniProtKB-KW"/>
</dbReference>
<dbReference type="GO" id="GO:0004730">
    <property type="term" value="F:pseudouridylate synthase activity"/>
    <property type="evidence" value="ECO:0007669"/>
    <property type="project" value="UniProtKB-UniRule"/>
</dbReference>
<dbReference type="GO" id="GO:0046113">
    <property type="term" value="P:nucleobase catabolic process"/>
    <property type="evidence" value="ECO:0007669"/>
    <property type="project" value="UniProtKB-UniRule"/>
</dbReference>
<dbReference type="Gene3D" id="3.40.1790.10">
    <property type="entry name" value="Indigoidine synthase domain"/>
    <property type="match status" value="1"/>
</dbReference>
<dbReference type="HAMAP" id="MF_01876">
    <property type="entry name" value="PsiMP_glycosidase"/>
    <property type="match status" value="1"/>
</dbReference>
<dbReference type="InterPro" id="IPR022830">
    <property type="entry name" value="Indigdn_synthA-like"/>
</dbReference>
<dbReference type="InterPro" id="IPR007342">
    <property type="entry name" value="PsuG"/>
</dbReference>
<dbReference type="PANTHER" id="PTHR42909:SF1">
    <property type="entry name" value="CARBOHYDRATE KINASE PFKB DOMAIN-CONTAINING PROTEIN"/>
    <property type="match status" value="1"/>
</dbReference>
<dbReference type="PANTHER" id="PTHR42909">
    <property type="entry name" value="ZGC:136858"/>
    <property type="match status" value="1"/>
</dbReference>
<dbReference type="Pfam" id="PF04227">
    <property type="entry name" value="Indigoidine_A"/>
    <property type="match status" value="1"/>
</dbReference>
<dbReference type="SUPFAM" id="SSF110581">
    <property type="entry name" value="Indigoidine synthase A-like"/>
    <property type="match status" value="1"/>
</dbReference>
<accession>Q7N4X5</accession>